<reference key="1">
    <citation type="journal article" date="2005" name="Nat. Biotechnol.">
        <title>Complete genome sequence of the acetic acid bacterium Gluconobacter oxydans.</title>
        <authorList>
            <person name="Prust C."/>
            <person name="Hoffmeister M."/>
            <person name="Liesegang H."/>
            <person name="Wiezer A."/>
            <person name="Fricke W.F."/>
            <person name="Ehrenreich A."/>
            <person name="Gottschalk G."/>
            <person name="Deppenmeier U."/>
        </authorList>
    </citation>
    <scope>NUCLEOTIDE SEQUENCE [LARGE SCALE GENOMIC DNA]</scope>
    <source>
        <strain>621H</strain>
    </source>
</reference>
<organism>
    <name type="scientific">Gluconobacter oxydans (strain 621H)</name>
    <name type="common">Gluconobacter suboxydans</name>
    <dbReference type="NCBI Taxonomy" id="290633"/>
    <lineage>
        <taxon>Bacteria</taxon>
        <taxon>Pseudomonadati</taxon>
        <taxon>Pseudomonadota</taxon>
        <taxon>Alphaproteobacteria</taxon>
        <taxon>Acetobacterales</taxon>
        <taxon>Acetobacteraceae</taxon>
        <taxon>Gluconobacter</taxon>
    </lineage>
</organism>
<dbReference type="EMBL" id="CP000009">
    <property type="protein sequence ID" value="AAW61427.1"/>
    <property type="molecule type" value="Genomic_DNA"/>
</dbReference>
<dbReference type="RefSeq" id="WP_011253209.1">
    <property type="nucleotide sequence ID" value="NC_006677.1"/>
</dbReference>
<dbReference type="SMR" id="Q5FQB9"/>
<dbReference type="STRING" id="290633.GOX1687"/>
<dbReference type="KEGG" id="gox:GOX1687"/>
<dbReference type="eggNOG" id="COG0823">
    <property type="taxonomic scope" value="Bacteria"/>
</dbReference>
<dbReference type="HOGENOM" id="CLU_047123_0_0_5"/>
<dbReference type="Proteomes" id="UP000006375">
    <property type="component" value="Chromosome"/>
</dbReference>
<dbReference type="GO" id="GO:0042597">
    <property type="term" value="C:periplasmic space"/>
    <property type="evidence" value="ECO:0007669"/>
    <property type="project" value="UniProtKB-SubCell"/>
</dbReference>
<dbReference type="GO" id="GO:0051301">
    <property type="term" value="P:cell division"/>
    <property type="evidence" value="ECO:0007669"/>
    <property type="project" value="UniProtKB-UniRule"/>
</dbReference>
<dbReference type="GO" id="GO:0017038">
    <property type="term" value="P:protein import"/>
    <property type="evidence" value="ECO:0007669"/>
    <property type="project" value="InterPro"/>
</dbReference>
<dbReference type="Gene3D" id="2.120.10.30">
    <property type="entry name" value="TolB, C-terminal domain"/>
    <property type="match status" value="1"/>
</dbReference>
<dbReference type="Gene3D" id="3.40.50.10070">
    <property type="entry name" value="TolB, N-terminal domain"/>
    <property type="match status" value="1"/>
</dbReference>
<dbReference type="HAMAP" id="MF_00671">
    <property type="entry name" value="TolB"/>
    <property type="match status" value="1"/>
</dbReference>
<dbReference type="InterPro" id="IPR011042">
    <property type="entry name" value="6-blade_b-propeller_TolB-like"/>
</dbReference>
<dbReference type="InterPro" id="IPR011659">
    <property type="entry name" value="PD40"/>
</dbReference>
<dbReference type="InterPro" id="IPR006311">
    <property type="entry name" value="TAT_signal"/>
</dbReference>
<dbReference type="InterPro" id="IPR014167">
    <property type="entry name" value="Tol-Pal_TolB"/>
</dbReference>
<dbReference type="InterPro" id="IPR007195">
    <property type="entry name" value="TolB_N"/>
</dbReference>
<dbReference type="NCBIfam" id="TIGR02800">
    <property type="entry name" value="propeller_TolB"/>
    <property type="match status" value="1"/>
</dbReference>
<dbReference type="PANTHER" id="PTHR36842:SF1">
    <property type="entry name" value="PROTEIN TOLB"/>
    <property type="match status" value="1"/>
</dbReference>
<dbReference type="PANTHER" id="PTHR36842">
    <property type="entry name" value="PROTEIN TOLB HOMOLOG"/>
    <property type="match status" value="1"/>
</dbReference>
<dbReference type="Pfam" id="PF07676">
    <property type="entry name" value="PD40"/>
    <property type="match status" value="3"/>
</dbReference>
<dbReference type="Pfam" id="PF04052">
    <property type="entry name" value="TolB_N"/>
    <property type="match status" value="1"/>
</dbReference>
<dbReference type="SUPFAM" id="SSF52964">
    <property type="entry name" value="TolB, N-terminal domain"/>
    <property type="match status" value="1"/>
</dbReference>
<dbReference type="SUPFAM" id="SSF69304">
    <property type="entry name" value="Tricorn protease N-terminal domain"/>
    <property type="match status" value="1"/>
</dbReference>
<dbReference type="PROSITE" id="PS51318">
    <property type="entry name" value="TAT"/>
    <property type="match status" value="1"/>
</dbReference>
<sequence length="453" mass="47275">MSFIPNTEAEALSALFSRRSVLGATAAGGLLATPLAAFAQSGAASGPGEAEITVDQARQEPIPIVVPNFGAGLGEQISGVITSDLNGTGLFKVMSGSVPPGSTPDFSALKAQGARAAVAGQAVGAGSVRVEMRLWDVLSGQQLQGTAYTASNSNWRRIAHIIADVIYERMLGEKGYFDTRIAYIARTGPRHHQITRLALMDQDGANERMLTGGEWLTLTPRFNPVRDQIAFMSYANNRPRVYLFDLASGRQQILGEFAGISFAPRFSPTGGSVVLSATRGGGSDIFVVDLASRAKRQITNSNGAIDTSPCFSPDGSQIVFNSDRGGSPQLYIMSASGGAAKRISYGSGQYGSPVWSPRGDLIAFTRIGSGGFSLGVMNPDGTGERILTQGFTVDGATFCPNGRVLAFCRQSASGAGGAGFASGIGTIDITGFNERPIRISTGASDPAWSPRNG</sequence>
<protein>
    <recommendedName>
        <fullName evidence="1">Tol-Pal system protein TolB</fullName>
    </recommendedName>
</protein>
<proteinExistence type="inferred from homology"/>
<evidence type="ECO:0000255" key="1">
    <source>
        <dbReference type="HAMAP-Rule" id="MF_00671"/>
    </source>
</evidence>
<name>TOLB_GLUOX</name>
<feature type="signal peptide" evidence="1">
    <location>
        <begin position="1"/>
        <end position="39"/>
    </location>
</feature>
<feature type="chain" id="PRO_0000034654" description="Tol-Pal system protein TolB" evidence="1">
    <location>
        <begin position="40"/>
        <end position="453"/>
    </location>
</feature>
<accession>Q5FQB9</accession>
<comment type="function">
    <text evidence="1">Part of the Tol-Pal system, which plays a role in outer membrane invagination during cell division and is important for maintaining outer membrane integrity.</text>
</comment>
<comment type="subunit">
    <text evidence="1">The Tol-Pal system is composed of five core proteins: the inner membrane proteins TolA, TolQ and TolR, the periplasmic protein TolB and the outer membrane protein Pal. They form a network linking the inner and outer membranes and the peptidoglycan layer.</text>
</comment>
<comment type="subcellular location">
    <subcellularLocation>
        <location evidence="1">Periplasm</location>
    </subcellularLocation>
</comment>
<comment type="similarity">
    <text evidence="1">Belongs to the TolB family.</text>
</comment>
<gene>
    <name evidence="1" type="primary">tolB</name>
    <name type="ordered locus">GOX1687</name>
</gene>
<keyword id="KW-0131">Cell cycle</keyword>
<keyword id="KW-0132">Cell division</keyword>
<keyword id="KW-0574">Periplasm</keyword>
<keyword id="KW-1185">Reference proteome</keyword>
<keyword id="KW-0732">Signal</keyword>